<name>KIT_MOUSE</name>
<dbReference type="EC" id="2.7.10.1"/>
<dbReference type="EMBL" id="Y00864">
    <property type="protein sequence ID" value="CAA68772.1"/>
    <property type="molecule type" value="mRNA"/>
</dbReference>
<dbReference type="EMBL" id="AK046795">
    <property type="protein sequence ID" value="BAC32872.1"/>
    <property type="molecule type" value="mRNA"/>
</dbReference>
<dbReference type="EMBL" id="X65997">
    <property type="protein sequence ID" value="CAA46798.1"/>
    <property type="molecule type" value="mRNA"/>
</dbReference>
<dbReference type="EMBL" id="X65998">
    <property type="protein sequence ID" value="CAA46799.1"/>
    <property type="status" value="ALT_SEQ"/>
    <property type="molecule type" value="Genomic_DNA"/>
</dbReference>
<dbReference type="EMBL" id="X65998">
    <property type="protein sequence ID" value="CAA46800.1"/>
    <property type="molecule type" value="Genomic_DNA"/>
</dbReference>
<dbReference type="EMBL" id="AY536430">
    <property type="protein sequence ID" value="AAS45606.1"/>
    <property type="molecule type" value="mRNA"/>
</dbReference>
<dbReference type="EMBL" id="AY536431">
    <property type="protein sequence ID" value="AAS45607.1"/>
    <property type="molecule type" value="mRNA"/>
</dbReference>
<dbReference type="EMBL" id="AC013622">
    <property type="status" value="NOT_ANNOTATED_CDS"/>
    <property type="molecule type" value="Genomic_DNA"/>
</dbReference>
<dbReference type="EMBL" id="AC115853">
    <property type="status" value="NOT_ANNOTATED_CDS"/>
    <property type="molecule type" value="Genomic_DNA"/>
</dbReference>
<dbReference type="EMBL" id="BC052457">
    <property type="protein sequence ID" value="AAH52457.1"/>
    <property type="molecule type" value="mRNA"/>
</dbReference>
<dbReference type="EMBL" id="BC075716">
    <property type="protein sequence ID" value="AAH75716.1"/>
    <property type="molecule type" value="mRNA"/>
</dbReference>
<dbReference type="EMBL" id="L11358">
    <property type="protein sequence ID" value="AAA37420.1"/>
    <property type="molecule type" value="Genomic_DNA"/>
</dbReference>
<dbReference type="CCDS" id="CCDS51525.1">
    <molecule id="P05532-1"/>
</dbReference>
<dbReference type="CCDS" id="CCDS80302.1">
    <molecule id="P05532-2"/>
</dbReference>
<dbReference type="PIR" id="A44876">
    <property type="entry name" value="A44876"/>
</dbReference>
<dbReference type="PIR" id="S00474">
    <property type="entry name" value="TVMSKT"/>
</dbReference>
<dbReference type="PIR" id="S24667">
    <property type="entry name" value="S24667"/>
</dbReference>
<dbReference type="PIR" id="S34435">
    <property type="entry name" value="S34435"/>
</dbReference>
<dbReference type="RefSeq" id="NP_001116205.1">
    <molecule id="P05532-1"/>
    <property type="nucleotide sequence ID" value="NM_001122733.1"/>
</dbReference>
<dbReference type="RefSeq" id="NP_066922.2">
    <molecule id="P05532-2"/>
    <property type="nucleotide sequence ID" value="NM_021099.3"/>
</dbReference>
<dbReference type="PDB" id="2O26">
    <property type="method" value="X-ray"/>
    <property type="resolution" value="2.50 A"/>
    <property type="chains" value="U/W/X/Y=25-314"/>
</dbReference>
<dbReference type="PDBsum" id="2O26"/>
<dbReference type="SMR" id="P05532"/>
<dbReference type="BioGRID" id="200957">
    <property type="interactions" value="37"/>
</dbReference>
<dbReference type="CORUM" id="P05532"/>
<dbReference type="DIP" id="DIP-59622N"/>
<dbReference type="FunCoup" id="P05532">
    <property type="interactions" value="1204"/>
</dbReference>
<dbReference type="IntAct" id="P05532">
    <property type="interactions" value="5"/>
</dbReference>
<dbReference type="MINT" id="P05532"/>
<dbReference type="STRING" id="10090.ENSMUSP00000005815"/>
<dbReference type="BindingDB" id="P05532"/>
<dbReference type="ChEMBL" id="CHEMBL2034798"/>
<dbReference type="DrugCentral" id="P05532"/>
<dbReference type="GlyCosmos" id="P05532">
    <property type="glycosylation" value="8 sites, No reported glycans"/>
</dbReference>
<dbReference type="GlyGen" id="P05532">
    <property type="glycosylation" value="10 sites, 4 N-linked glycans (4 sites), 1 O-linked glycan (1 site)"/>
</dbReference>
<dbReference type="iPTMnet" id="P05532"/>
<dbReference type="PhosphoSitePlus" id="P05532"/>
<dbReference type="SwissPalm" id="P05532"/>
<dbReference type="PaxDb" id="10090-ENSMUSP00000005815"/>
<dbReference type="ProteomicsDB" id="263611">
    <molecule id="P05532-1"/>
</dbReference>
<dbReference type="ProteomicsDB" id="263612">
    <molecule id="P05532-2"/>
</dbReference>
<dbReference type="ProteomicsDB" id="263613">
    <molecule id="P05532-3"/>
</dbReference>
<dbReference type="ABCD" id="P05532">
    <property type="antibodies" value="1 sequenced antibody"/>
</dbReference>
<dbReference type="Antibodypedia" id="1392">
    <property type="antibodies" value="5552 antibodies from 58 providers"/>
</dbReference>
<dbReference type="DNASU" id="16590"/>
<dbReference type="Ensembl" id="ENSMUST00000005815.7">
    <molecule id="P05532-1"/>
    <property type="protein sequence ID" value="ENSMUSP00000005815.7"/>
    <property type="gene ID" value="ENSMUSG00000005672.13"/>
</dbReference>
<dbReference type="Ensembl" id="ENSMUST00000144270.8">
    <molecule id="P05532-2"/>
    <property type="protein sequence ID" value="ENSMUSP00000116465.3"/>
    <property type="gene ID" value="ENSMUSG00000005672.13"/>
</dbReference>
<dbReference type="GeneID" id="16590"/>
<dbReference type="KEGG" id="mmu:16590"/>
<dbReference type="UCSC" id="uc008xug.2">
    <molecule id="P05532-1"/>
    <property type="organism name" value="mouse"/>
</dbReference>
<dbReference type="UCSC" id="uc012dxj.1">
    <molecule id="P05532-2"/>
    <property type="organism name" value="mouse"/>
</dbReference>
<dbReference type="AGR" id="MGI:96677"/>
<dbReference type="CTD" id="3815"/>
<dbReference type="MGI" id="MGI:96677">
    <property type="gene designation" value="Kit"/>
</dbReference>
<dbReference type="VEuPathDB" id="HostDB:ENSMUSG00000005672"/>
<dbReference type="eggNOG" id="KOG0200">
    <property type="taxonomic scope" value="Eukaryota"/>
</dbReference>
<dbReference type="GeneTree" id="ENSGT00940000155626"/>
<dbReference type="HOGENOM" id="CLU_000288_49_0_1"/>
<dbReference type="InParanoid" id="P05532"/>
<dbReference type="OMA" id="CDSTNEY"/>
<dbReference type="OrthoDB" id="6077854at2759"/>
<dbReference type="TreeFam" id="TF325768"/>
<dbReference type="BRENDA" id="2.7.10.1">
    <property type="organism ID" value="3474"/>
</dbReference>
<dbReference type="Reactome" id="R-MMU-1257604">
    <property type="pathway name" value="PIP3 activates AKT signaling"/>
</dbReference>
<dbReference type="Reactome" id="R-MMU-1433557">
    <property type="pathway name" value="Signaling by SCF-KIT"/>
</dbReference>
<dbReference type="Reactome" id="R-MMU-1433559">
    <property type="pathway name" value="Regulation of KIT signaling"/>
</dbReference>
<dbReference type="Reactome" id="R-MMU-5673001">
    <property type="pathway name" value="RAF/MAP kinase cascade"/>
</dbReference>
<dbReference type="Reactome" id="R-MMU-6811558">
    <property type="pathway name" value="PI5P, PP2A and IER3 Regulate PI3K/AKT Signaling"/>
</dbReference>
<dbReference type="Reactome" id="R-MMU-9856649">
    <property type="pathway name" value="Transcriptional and post-translational regulation of MITF-M expression and activity"/>
</dbReference>
<dbReference type="BioGRID-ORCS" id="16590">
    <property type="hits" value="2 hits in 80 CRISPR screens"/>
</dbReference>
<dbReference type="ChiTaRS" id="Kit">
    <property type="organism name" value="mouse"/>
</dbReference>
<dbReference type="EvolutionaryTrace" id="P05532"/>
<dbReference type="PRO" id="PR:P05532"/>
<dbReference type="Proteomes" id="UP000000589">
    <property type="component" value="Chromosome 5"/>
</dbReference>
<dbReference type="RNAct" id="P05532">
    <property type="molecule type" value="protein"/>
</dbReference>
<dbReference type="Bgee" id="ENSMUSG00000005672">
    <property type="expression patterns" value="Expressed in cerebellum lobe and 308 other cell types or tissues"/>
</dbReference>
<dbReference type="GO" id="GO:0001669">
    <property type="term" value="C:acrosomal vesicle"/>
    <property type="evidence" value="ECO:0007669"/>
    <property type="project" value="Ensembl"/>
</dbReference>
<dbReference type="GO" id="GO:0009986">
    <property type="term" value="C:cell surface"/>
    <property type="evidence" value="ECO:0000314"/>
    <property type="project" value="MGI"/>
</dbReference>
<dbReference type="GO" id="GO:0005911">
    <property type="term" value="C:cell-cell junction"/>
    <property type="evidence" value="ECO:0000314"/>
    <property type="project" value="MGI"/>
</dbReference>
<dbReference type="GO" id="GO:0009898">
    <property type="term" value="C:cytoplasmic side of plasma membrane"/>
    <property type="evidence" value="ECO:0007669"/>
    <property type="project" value="Ensembl"/>
</dbReference>
<dbReference type="GO" id="GO:0009897">
    <property type="term" value="C:external side of plasma membrane"/>
    <property type="evidence" value="ECO:0000314"/>
    <property type="project" value="MGI"/>
</dbReference>
<dbReference type="GO" id="GO:0005615">
    <property type="term" value="C:extracellular space"/>
    <property type="evidence" value="ECO:0007669"/>
    <property type="project" value="Ensembl"/>
</dbReference>
<dbReference type="GO" id="GO:0001650">
    <property type="term" value="C:fibrillar center"/>
    <property type="evidence" value="ECO:0007669"/>
    <property type="project" value="Ensembl"/>
</dbReference>
<dbReference type="GO" id="GO:0005886">
    <property type="term" value="C:plasma membrane"/>
    <property type="evidence" value="ECO:0000304"/>
    <property type="project" value="Reactome"/>
</dbReference>
<dbReference type="GO" id="GO:0005524">
    <property type="term" value="F:ATP binding"/>
    <property type="evidence" value="ECO:0007669"/>
    <property type="project" value="UniProtKB-KW"/>
</dbReference>
<dbReference type="GO" id="GO:0019955">
    <property type="term" value="F:cytokine binding"/>
    <property type="evidence" value="ECO:0000250"/>
    <property type="project" value="UniProtKB"/>
</dbReference>
<dbReference type="GO" id="GO:0046872">
    <property type="term" value="F:metal ion binding"/>
    <property type="evidence" value="ECO:0007669"/>
    <property type="project" value="UniProtKB-KW"/>
</dbReference>
<dbReference type="GO" id="GO:0002020">
    <property type="term" value="F:protease binding"/>
    <property type="evidence" value="ECO:0000353"/>
    <property type="project" value="BHF-UCL"/>
</dbReference>
<dbReference type="GO" id="GO:0042803">
    <property type="term" value="F:protein homodimerization activity"/>
    <property type="evidence" value="ECO:0007669"/>
    <property type="project" value="Ensembl"/>
</dbReference>
<dbReference type="GO" id="GO:0042169">
    <property type="term" value="F:SH2 domain binding"/>
    <property type="evidence" value="ECO:0000353"/>
    <property type="project" value="BHF-UCL"/>
</dbReference>
<dbReference type="GO" id="GO:0005020">
    <property type="term" value="F:stem cell factor receptor activity"/>
    <property type="evidence" value="ECO:0000314"/>
    <property type="project" value="MGI"/>
</dbReference>
<dbReference type="GO" id="GO:0004714">
    <property type="term" value="F:transmembrane receptor protein tyrosine kinase activity"/>
    <property type="evidence" value="ECO:0000250"/>
    <property type="project" value="UniProtKB"/>
</dbReference>
<dbReference type="GO" id="GO:0030036">
    <property type="term" value="P:actin cytoskeleton organization"/>
    <property type="evidence" value="ECO:0000250"/>
    <property type="project" value="UniProtKB"/>
</dbReference>
<dbReference type="GO" id="GO:0060326">
    <property type="term" value="P:cell chemotaxis"/>
    <property type="evidence" value="ECO:0000250"/>
    <property type="project" value="UniProtKB"/>
</dbReference>
<dbReference type="GO" id="GO:0030154">
    <property type="term" value="P:cell differentiation"/>
    <property type="evidence" value="ECO:0000304"/>
    <property type="project" value="MGI"/>
</dbReference>
<dbReference type="GO" id="GO:0008283">
    <property type="term" value="P:cell population proliferation"/>
    <property type="evidence" value="ECO:0000316"/>
    <property type="project" value="MGI"/>
</dbReference>
<dbReference type="GO" id="GO:0006935">
    <property type="term" value="P:chemotaxis"/>
    <property type="evidence" value="ECO:0000304"/>
    <property type="project" value="MGI"/>
</dbReference>
<dbReference type="GO" id="GO:0019221">
    <property type="term" value="P:cytokine-mediated signaling pathway"/>
    <property type="evidence" value="ECO:0000314"/>
    <property type="project" value="MGI"/>
</dbReference>
<dbReference type="GO" id="GO:0050910">
    <property type="term" value="P:detection of mechanical stimulus involved in sensory perception of sound"/>
    <property type="evidence" value="ECO:0000315"/>
    <property type="project" value="UniProtKB"/>
</dbReference>
<dbReference type="GO" id="GO:0048066">
    <property type="term" value="P:developmental pigmentation"/>
    <property type="evidence" value="ECO:0000315"/>
    <property type="project" value="MGI"/>
</dbReference>
<dbReference type="GO" id="GO:0048565">
    <property type="term" value="P:digestive tract development"/>
    <property type="evidence" value="ECO:0000315"/>
    <property type="project" value="UniProtKB"/>
</dbReference>
<dbReference type="GO" id="GO:0035234">
    <property type="term" value="P:ectopic germ cell programmed cell death"/>
    <property type="evidence" value="ECO:0000315"/>
    <property type="project" value="MGI"/>
</dbReference>
<dbReference type="GO" id="GO:0035162">
    <property type="term" value="P:embryonic hemopoiesis"/>
    <property type="evidence" value="ECO:0000315"/>
    <property type="project" value="UniProtKB"/>
</dbReference>
<dbReference type="GO" id="GO:0050673">
    <property type="term" value="P:epithelial cell proliferation"/>
    <property type="evidence" value="ECO:0007669"/>
    <property type="project" value="Ensembl"/>
</dbReference>
<dbReference type="GO" id="GO:0030218">
    <property type="term" value="P:erythrocyte differentiation"/>
    <property type="evidence" value="ECO:0000315"/>
    <property type="project" value="UniProtKB"/>
</dbReference>
<dbReference type="GO" id="GO:0038162">
    <property type="term" value="P:erythropoietin-mediated signaling pathway"/>
    <property type="evidence" value="ECO:0000315"/>
    <property type="project" value="UniProtKB"/>
</dbReference>
<dbReference type="GO" id="GO:0038093">
    <property type="term" value="P:Fc receptor signaling pathway"/>
    <property type="evidence" value="ECO:0000250"/>
    <property type="project" value="UniProtKB"/>
</dbReference>
<dbReference type="GO" id="GO:0007281">
    <property type="term" value="P:germ cell development"/>
    <property type="evidence" value="ECO:0000304"/>
    <property type="project" value="MGI"/>
</dbReference>
<dbReference type="GO" id="GO:0008354">
    <property type="term" value="P:germ cell migration"/>
    <property type="evidence" value="ECO:0007669"/>
    <property type="project" value="Ensembl"/>
</dbReference>
<dbReference type="GO" id="GO:0006687">
    <property type="term" value="P:glycosphingolipid metabolic process"/>
    <property type="evidence" value="ECO:0000315"/>
    <property type="project" value="MGI"/>
</dbReference>
<dbReference type="GO" id="GO:0035701">
    <property type="term" value="P:hematopoietic stem cell migration"/>
    <property type="evidence" value="ECO:0000315"/>
    <property type="project" value="MGI"/>
</dbReference>
<dbReference type="GO" id="GO:0030097">
    <property type="term" value="P:hemopoiesis"/>
    <property type="evidence" value="ECO:0000315"/>
    <property type="project" value="MGI"/>
</dbReference>
<dbReference type="GO" id="GO:0002327">
    <property type="term" value="P:immature B cell differentiation"/>
    <property type="evidence" value="ECO:0000315"/>
    <property type="project" value="UniProtKB"/>
</dbReference>
<dbReference type="GO" id="GO:0006954">
    <property type="term" value="P:inflammatory response"/>
    <property type="evidence" value="ECO:0000315"/>
    <property type="project" value="UniProtKB"/>
</dbReference>
<dbReference type="GO" id="GO:0035556">
    <property type="term" value="P:intracellular signal transduction"/>
    <property type="evidence" value="ECO:0000314"/>
    <property type="project" value="MGI"/>
</dbReference>
<dbReference type="GO" id="GO:0030032">
    <property type="term" value="P:lamellipodium assembly"/>
    <property type="evidence" value="ECO:0000314"/>
    <property type="project" value="UniProtKB"/>
</dbReference>
<dbReference type="GO" id="GO:0002320">
    <property type="term" value="P:lymphoid progenitor cell differentiation"/>
    <property type="evidence" value="ECO:0000316"/>
    <property type="project" value="MGI"/>
</dbReference>
<dbReference type="GO" id="GO:0008584">
    <property type="term" value="P:male gonad development"/>
    <property type="evidence" value="ECO:0007669"/>
    <property type="project" value="Ensembl"/>
</dbReference>
<dbReference type="GO" id="GO:0002551">
    <property type="term" value="P:mast cell chemotaxis"/>
    <property type="evidence" value="ECO:0007669"/>
    <property type="project" value="Ensembl"/>
</dbReference>
<dbReference type="GO" id="GO:0043303">
    <property type="term" value="P:mast cell degranulation"/>
    <property type="evidence" value="ECO:0000250"/>
    <property type="project" value="UniProtKB"/>
</dbReference>
<dbReference type="GO" id="GO:0060374">
    <property type="term" value="P:mast cell differentiation"/>
    <property type="evidence" value="ECO:0000315"/>
    <property type="project" value="UniProtKB"/>
</dbReference>
<dbReference type="GO" id="GO:0070662">
    <property type="term" value="P:mast cell proliferation"/>
    <property type="evidence" value="ECO:0000316"/>
    <property type="project" value="MGI"/>
</dbReference>
<dbReference type="GO" id="GO:0035855">
    <property type="term" value="P:megakaryocyte development"/>
    <property type="evidence" value="ECO:0000315"/>
    <property type="project" value="UniProtKB"/>
</dbReference>
<dbReference type="GO" id="GO:0097326">
    <property type="term" value="P:melanocyte adhesion"/>
    <property type="evidence" value="ECO:0000314"/>
    <property type="project" value="UniProtKB"/>
</dbReference>
<dbReference type="GO" id="GO:0030318">
    <property type="term" value="P:melanocyte differentiation"/>
    <property type="evidence" value="ECO:0000315"/>
    <property type="project" value="UniProtKB"/>
</dbReference>
<dbReference type="GO" id="GO:0097324">
    <property type="term" value="P:melanocyte migration"/>
    <property type="evidence" value="ECO:0000315"/>
    <property type="project" value="UniProtKB"/>
</dbReference>
<dbReference type="GO" id="GO:0002318">
    <property type="term" value="P:myeloid progenitor cell differentiation"/>
    <property type="evidence" value="ECO:0000316"/>
    <property type="project" value="MGI"/>
</dbReference>
<dbReference type="GO" id="GO:0051093">
    <property type="term" value="P:negative regulation of developmental process"/>
    <property type="evidence" value="ECO:0000315"/>
    <property type="project" value="MGI"/>
</dbReference>
<dbReference type="GO" id="GO:0043069">
    <property type="term" value="P:negative regulation of programmed cell death"/>
    <property type="evidence" value="ECO:0000315"/>
    <property type="project" value="MGI"/>
</dbReference>
<dbReference type="GO" id="GO:2000242">
    <property type="term" value="P:negative regulation of reproductive process"/>
    <property type="evidence" value="ECO:0000315"/>
    <property type="project" value="MGI"/>
</dbReference>
<dbReference type="GO" id="GO:0001541">
    <property type="term" value="P:ovarian follicle development"/>
    <property type="evidence" value="ECO:0000315"/>
    <property type="project" value="UniProtKB"/>
</dbReference>
<dbReference type="GO" id="GO:0043473">
    <property type="term" value="P:pigmentation"/>
    <property type="evidence" value="ECO:0000315"/>
    <property type="project" value="UniProtKB"/>
</dbReference>
<dbReference type="GO" id="GO:0030335">
    <property type="term" value="P:positive regulation of cell migration"/>
    <property type="evidence" value="ECO:0007669"/>
    <property type="project" value="Ensembl"/>
</dbReference>
<dbReference type="GO" id="GO:1904343">
    <property type="term" value="P:positive regulation of colon smooth muscle contraction"/>
    <property type="evidence" value="ECO:0007669"/>
    <property type="project" value="Ensembl"/>
</dbReference>
<dbReference type="GO" id="GO:0002732">
    <property type="term" value="P:positive regulation of dendritic cell cytokine production"/>
    <property type="evidence" value="ECO:0000315"/>
    <property type="project" value="UniProtKB"/>
</dbReference>
<dbReference type="GO" id="GO:0010628">
    <property type="term" value="P:positive regulation of gene expression"/>
    <property type="evidence" value="ECO:0000315"/>
    <property type="project" value="MGI"/>
</dbReference>
<dbReference type="GO" id="GO:0048170">
    <property type="term" value="P:positive regulation of long-term neuronal synaptic plasticity"/>
    <property type="evidence" value="ECO:0007669"/>
    <property type="project" value="Ensembl"/>
</dbReference>
<dbReference type="GO" id="GO:0043410">
    <property type="term" value="P:positive regulation of MAPK cascade"/>
    <property type="evidence" value="ECO:0007669"/>
    <property type="project" value="Ensembl"/>
</dbReference>
<dbReference type="GO" id="GO:0032765">
    <property type="term" value="P:positive regulation of mast cell cytokine production"/>
    <property type="evidence" value="ECO:0000250"/>
    <property type="project" value="UniProtKB"/>
</dbReference>
<dbReference type="GO" id="GO:0070668">
    <property type="term" value="P:positive regulation of mast cell proliferation"/>
    <property type="evidence" value="ECO:0000316"/>
    <property type="project" value="MGI"/>
</dbReference>
<dbReference type="GO" id="GO:0045747">
    <property type="term" value="P:positive regulation of Notch signaling pathway"/>
    <property type="evidence" value="ECO:0007669"/>
    <property type="project" value="Ensembl"/>
</dbReference>
<dbReference type="GO" id="GO:0031274">
    <property type="term" value="P:positive regulation of pseudopodium assembly"/>
    <property type="evidence" value="ECO:0007669"/>
    <property type="project" value="Ensembl"/>
</dbReference>
<dbReference type="GO" id="GO:0120072">
    <property type="term" value="P:positive regulation of pyloric antrum smooth muscle contraction"/>
    <property type="evidence" value="ECO:0007669"/>
    <property type="project" value="Ensembl"/>
</dbReference>
<dbReference type="GO" id="GO:0046427">
    <property type="term" value="P:positive regulation of receptor signaling pathway via JAK-STAT"/>
    <property type="evidence" value="ECO:0007669"/>
    <property type="project" value="Ensembl"/>
</dbReference>
<dbReference type="GO" id="GO:1904349">
    <property type="term" value="P:positive regulation of small intestine smooth muscle contraction"/>
    <property type="evidence" value="ECO:0007669"/>
    <property type="project" value="Ensembl"/>
</dbReference>
<dbReference type="GO" id="GO:1905065">
    <property type="term" value="P:positive regulation of vascular associated smooth muscle cell differentiation"/>
    <property type="evidence" value="ECO:0007669"/>
    <property type="project" value="Ensembl"/>
</dbReference>
<dbReference type="GO" id="GO:0012501">
    <property type="term" value="P:programmed cell death"/>
    <property type="evidence" value="ECO:0000316"/>
    <property type="project" value="MGI"/>
</dbReference>
<dbReference type="GO" id="GO:1904251">
    <property type="term" value="P:regulation of bile acid metabolic process"/>
    <property type="evidence" value="ECO:0007669"/>
    <property type="project" value="Ensembl"/>
</dbReference>
<dbReference type="GO" id="GO:0008360">
    <property type="term" value="P:regulation of cell shape"/>
    <property type="evidence" value="ECO:0000314"/>
    <property type="project" value="UniProtKB"/>
</dbReference>
<dbReference type="GO" id="GO:0046686">
    <property type="term" value="P:response to cadmium ion"/>
    <property type="evidence" value="ECO:0007669"/>
    <property type="project" value="Ensembl"/>
</dbReference>
<dbReference type="GO" id="GO:0009314">
    <property type="term" value="P:response to radiation"/>
    <property type="evidence" value="ECO:0000315"/>
    <property type="project" value="MGI"/>
</dbReference>
<dbReference type="GO" id="GO:0035019">
    <property type="term" value="P:somatic stem cell population maintenance"/>
    <property type="evidence" value="ECO:0007669"/>
    <property type="project" value="Ensembl"/>
</dbReference>
<dbReference type="GO" id="GO:0007286">
    <property type="term" value="P:spermatid development"/>
    <property type="evidence" value="ECO:0000315"/>
    <property type="project" value="MGI"/>
</dbReference>
<dbReference type="GO" id="GO:0007283">
    <property type="term" value="P:spermatogenesis"/>
    <property type="evidence" value="ECO:0000315"/>
    <property type="project" value="UniProtKB"/>
</dbReference>
<dbReference type="GO" id="GO:0048863">
    <property type="term" value="P:stem cell differentiation"/>
    <property type="evidence" value="ECO:0000315"/>
    <property type="project" value="UniProtKB"/>
</dbReference>
<dbReference type="GO" id="GO:0030217">
    <property type="term" value="P:T cell differentiation"/>
    <property type="evidence" value="ECO:0000315"/>
    <property type="project" value="UniProtKB"/>
</dbReference>
<dbReference type="GO" id="GO:0043586">
    <property type="term" value="P:tongue development"/>
    <property type="evidence" value="ECO:0007669"/>
    <property type="project" value="Ensembl"/>
</dbReference>
<dbReference type="GO" id="GO:0008542">
    <property type="term" value="P:visual learning"/>
    <property type="evidence" value="ECO:0007669"/>
    <property type="project" value="Ensembl"/>
</dbReference>
<dbReference type="CDD" id="cd00096">
    <property type="entry name" value="Ig"/>
    <property type="match status" value="1"/>
</dbReference>
<dbReference type="CDD" id="cd05860">
    <property type="entry name" value="IgI_4_SCFR"/>
    <property type="match status" value="1"/>
</dbReference>
<dbReference type="CDD" id="cd05104">
    <property type="entry name" value="PTKc_Kit"/>
    <property type="match status" value="1"/>
</dbReference>
<dbReference type="FunFam" id="1.10.510.10:FF:000177">
    <property type="entry name" value="Mast/stem cell growth factor receptor"/>
    <property type="match status" value="1"/>
</dbReference>
<dbReference type="FunFam" id="2.60.40.10:FF:000422">
    <property type="entry name" value="Mast/stem cell growth factor receptor"/>
    <property type="match status" value="1"/>
</dbReference>
<dbReference type="FunFam" id="2.60.40.10:FF:000429">
    <property type="entry name" value="Mast/stem cell growth factor receptor"/>
    <property type="match status" value="1"/>
</dbReference>
<dbReference type="FunFam" id="2.60.40.10:FF:000469">
    <property type="entry name" value="Mast/stem cell growth factor receptor"/>
    <property type="match status" value="1"/>
</dbReference>
<dbReference type="FunFam" id="2.60.40.10:FF:000544">
    <property type="entry name" value="Mast/stem cell growth factor receptor"/>
    <property type="match status" value="1"/>
</dbReference>
<dbReference type="FunFam" id="2.60.40.10:FF:000815">
    <property type="entry name" value="Mast/stem cell growth factor receptor"/>
    <property type="match status" value="1"/>
</dbReference>
<dbReference type="FunFam" id="3.30.200.20:FF:000025">
    <property type="entry name" value="Platelet-derived growth factor receptor alpha"/>
    <property type="match status" value="1"/>
</dbReference>
<dbReference type="Gene3D" id="2.60.40.10">
    <property type="entry name" value="Immunoglobulins"/>
    <property type="match status" value="5"/>
</dbReference>
<dbReference type="Gene3D" id="3.30.200.20">
    <property type="entry name" value="Phosphorylase Kinase, domain 1"/>
    <property type="match status" value="1"/>
</dbReference>
<dbReference type="Gene3D" id="1.10.510.10">
    <property type="entry name" value="Transferase(Phosphotransferase) domain 1"/>
    <property type="match status" value="1"/>
</dbReference>
<dbReference type="InterPro" id="IPR007110">
    <property type="entry name" value="Ig-like_dom"/>
</dbReference>
<dbReference type="InterPro" id="IPR036179">
    <property type="entry name" value="Ig-like_dom_sf"/>
</dbReference>
<dbReference type="InterPro" id="IPR013783">
    <property type="entry name" value="Ig-like_fold"/>
</dbReference>
<dbReference type="InterPro" id="IPR003599">
    <property type="entry name" value="Ig_sub"/>
</dbReference>
<dbReference type="InterPro" id="IPR003598">
    <property type="entry name" value="Ig_sub2"/>
</dbReference>
<dbReference type="InterPro" id="IPR013151">
    <property type="entry name" value="Immunoglobulin_dom"/>
</dbReference>
<dbReference type="InterPro" id="IPR011009">
    <property type="entry name" value="Kinase-like_dom_sf"/>
</dbReference>
<dbReference type="InterPro" id="IPR000719">
    <property type="entry name" value="Prot_kinase_dom"/>
</dbReference>
<dbReference type="InterPro" id="IPR017441">
    <property type="entry name" value="Protein_kinase_ATP_BS"/>
</dbReference>
<dbReference type="InterPro" id="IPR050122">
    <property type="entry name" value="RTK"/>
</dbReference>
<dbReference type="InterPro" id="IPR027263">
    <property type="entry name" value="SCGF_receptor"/>
</dbReference>
<dbReference type="InterPro" id="IPR001245">
    <property type="entry name" value="Ser-Thr/Tyr_kinase_cat_dom"/>
</dbReference>
<dbReference type="InterPro" id="IPR008266">
    <property type="entry name" value="Tyr_kinase_AS"/>
</dbReference>
<dbReference type="InterPro" id="IPR020635">
    <property type="entry name" value="Tyr_kinase_cat_dom"/>
</dbReference>
<dbReference type="InterPro" id="IPR001824">
    <property type="entry name" value="Tyr_kinase_rcpt_3_CS"/>
</dbReference>
<dbReference type="PANTHER" id="PTHR24416:SF46">
    <property type="entry name" value="MAST_STEM CELL GROWTH FACTOR RECEPTOR KIT"/>
    <property type="match status" value="1"/>
</dbReference>
<dbReference type="PANTHER" id="PTHR24416">
    <property type="entry name" value="TYROSINE-PROTEIN KINASE RECEPTOR"/>
    <property type="match status" value="1"/>
</dbReference>
<dbReference type="Pfam" id="PF00047">
    <property type="entry name" value="ig"/>
    <property type="match status" value="1"/>
</dbReference>
<dbReference type="Pfam" id="PF25305">
    <property type="entry name" value="Ig_PDGFR_d4"/>
    <property type="match status" value="1"/>
</dbReference>
<dbReference type="Pfam" id="PF07714">
    <property type="entry name" value="PK_Tyr_Ser-Thr"/>
    <property type="match status" value="1"/>
</dbReference>
<dbReference type="PIRSF" id="PIRSF500951">
    <property type="entry name" value="SCGF_recepter"/>
    <property type="match status" value="1"/>
</dbReference>
<dbReference type="PIRSF" id="PIRSF000615">
    <property type="entry name" value="TyrPK_CSF1-R"/>
    <property type="match status" value="1"/>
</dbReference>
<dbReference type="SMART" id="SM00409">
    <property type="entry name" value="IG"/>
    <property type="match status" value="4"/>
</dbReference>
<dbReference type="SMART" id="SM00408">
    <property type="entry name" value="IGc2"/>
    <property type="match status" value="3"/>
</dbReference>
<dbReference type="SMART" id="SM00219">
    <property type="entry name" value="TyrKc"/>
    <property type="match status" value="1"/>
</dbReference>
<dbReference type="SUPFAM" id="SSF48726">
    <property type="entry name" value="Immunoglobulin"/>
    <property type="match status" value="4"/>
</dbReference>
<dbReference type="SUPFAM" id="SSF56112">
    <property type="entry name" value="Protein kinase-like (PK-like)"/>
    <property type="match status" value="1"/>
</dbReference>
<dbReference type="PROSITE" id="PS50835">
    <property type="entry name" value="IG_LIKE"/>
    <property type="match status" value="1"/>
</dbReference>
<dbReference type="PROSITE" id="PS00107">
    <property type="entry name" value="PROTEIN_KINASE_ATP"/>
    <property type="match status" value="1"/>
</dbReference>
<dbReference type="PROSITE" id="PS50011">
    <property type="entry name" value="PROTEIN_KINASE_DOM"/>
    <property type="match status" value="1"/>
</dbReference>
<dbReference type="PROSITE" id="PS00109">
    <property type="entry name" value="PROTEIN_KINASE_TYR"/>
    <property type="match status" value="1"/>
</dbReference>
<dbReference type="PROSITE" id="PS00240">
    <property type="entry name" value="RECEPTOR_TYR_KIN_III"/>
    <property type="match status" value="1"/>
</dbReference>
<accession>P05532</accession>
<accession>Q61415</accession>
<accession>Q61416</accession>
<accession>Q61417</accession>
<accession>Q6LEE9</accession>
<accession>Q6QJB7</accession>
<accession>Q6QJB8</accession>
<accession>Q7TS86</accession>
<accession>Q8C8K9</accession>
<reference key="1">
    <citation type="journal article" date="1988" name="EMBO J.">
        <title>Primary structure of c-kit: relationship with the CSF-1/PDGF receptor kinase family -- oncogenic activation of v-kit involves deletion of extracellular domain and C-terminus.</title>
        <authorList>
            <person name="Qiu F."/>
            <person name="Ray P."/>
            <person name="Brown K."/>
            <person name="Barker P.E."/>
            <person name="Jhanwar S."/>
            <person name="Ruddle F.H."/>
            <person name="Besmer P."/>
        </authorList>
    </citation>
    <scope>NUCLEOTIDE SEQUENCE [MRNA] (ISOFORM 2)</scope>
    <scope>VARIANT GLU-207</scope>
    <source>
        <strain>BALB/cJ</strain>
        <tissue>Brain</tissue>
    </source>
</reference>
<reference key="2">
    <citation type="journal article" date="1991" name="Nucleic Acids Res.">
        <title>Exon skipping by mutation of an authentic splice site of c-kit gene in W/W mouse.</title>
        <authorList>
            <person name="Hayashi S."/>
            <person name="Kunisada T."/>
            <person name="Ogawa M."/>
            <person name="Yamaguchi K."/>
            <person name="Nishikawa S."/>
        </authorList>
    </citation>
    <scope>NUCLEOTIDE SEQUENCE [MRNA] (ISOFORM 1)</scope>
    <source>
        <strain>C57BL/6J</strain>
        <tissue>Medulla oblongata</tissue>
    </source>
</reference>
<reference key="3">
    <citation type="journal article" date="1992" name="Dev. Biol.">
        <title>A novel c-kit transcript, potentially encoding a truncated receptor, originates within a kit gene intron in mouse spermatids.</title>
        <authorList>
            <person name="Rossi P."/>
            <person name="Marziali G."/>
            <person name="Albanesi C."/>
            <person name="Charlesworth A."/>
            <person name="Geremia R."/>
            <person name="Sorrentino V."/>
        </authorList>
    </citation>
    <scope>NUCLEOTIDE SEQUENCE [GENOMIC DNA / MRNA] (ISOFORM 3)</scope>
    <scope>TISSUE SPECIFICITY</scope>
    <source>
        <strain>ICR</strain>
    </source>
</reference>
<reference key="4">
    <citation type="journal article" date="2005" name="Genetics">
        <title>Identification of a novel point mutation of mouse proto-oncogene c-kit through N-ethyl-N-nitrosourea mutagenesis.</title>
        <authorList>
            <person name="Ruan H.B."/>
            <person name="Zhang N."/>
            <person name="Gao X."/>
        </authorList>
    </citation>
    <scope>NUCLEOTIDE SEQUENCE [MRNA] (ISOFORM 2)</scope>
    <scope>MUTAGENESIS OF PHE-860</scope>
    <source>
        <strain>C57BL/6J</strain>
    </source>
</reference>
<reference key="5">
    <citation type="journal article" date="2009" name="PLoS Biol.">
        <title>Lineage-specific biology revealed by a finished genome assembly of the mouse.</title>
        <authorList>
            <person name="Church D.M."/>
            <person name="Goodstadt L."/>
            <person name="Hillier L.W."/>
            <person name="Zody M.C."/>
            <person name="Goldstein S."/>
            <person name="She X."/>
            <person name="Bult C.J."/>
            <person name="Agarwala R."/>
            <person name="Cherry J.L."/>
            <person name="DiCuccio M."/>
            <person name="Hlavina W."/>
            <person name="Kapustin Y."/>
            <person name="Meric P."/>
            <person name="Maglott D."/>
            <person name="Birtle Z."/>
            <person name="Marques A.C."/>
            <person name="Graves T."/>
            <person name="Zhou S."/>
            <person name="Teague B."/>
            <person name="Potamousis K."/>
            <person name="Churas C."/>
            <person name="Place M."/>
            <person name="Herschleb J."/>
            <person name="Runnheim R."/>
            <person name="Forrest D."/>
            <person name="Amos-Landgraf J."/>
            <person name="Schwartz D.C."/>
            <person name="Cheng Z."/>
            <person name="Lindblad-Toh K."/>
            <person name="Eichler E.E."/>
            <person name="Ponting C.P."/>
        </authorList>
    </citation>
    <scope>NUCLEOTIDE SEQUENCE [LARGE SCALE GENOMIC DNA]</scope>
    <source>
        <strain>C57BL/6J</strain>
    </source>
</reference>
<reference key="6">
    <citation type="journal article" date="2004" name="Genome Res.">
        <title>The status, quality, and expansion of the NIH full-length cDNA project: the Mammalian Gene Collection (MGC).</title>
        <authorList>
            <consortium name="The MGC Project Team"/>
        </authorList>
    </citation>
    <scope>NUCLEOTIDE SEQUENCE [LARGE SCALE MRNA] (ISOFORMS 1 AND 2)</scope>
    <source>
        <strain>C57BL/6J</strain>
        <strain>FVB/N</strain>
        <tissue>Brain</tissue>
        <tissue>Mammary tumor</tissue>
    </source>
</reference>
<reference key="7">
    <citation type="journal article" date="1993" name="Biochem. Biophys. Res. Commun.">
        <title>Cloning and functional analysis of the mouse c-kit promoter.</title>
        <authorList>
            <person name="Yasuda H."/>
            <person name="Galli S.J."/>
            <person name="Geissler E.N."/>
        </authorList>
    </citation>
    <scope>NUCLEOTIDE SEQUENCE [GENOMIC DNA] OF 1-22</scope>
    <source>
        <strain>BALB/cJ</strain>
    </source>
</reference>
<reference key="8">
    <citation type="journal article" date="1990" name="EMBO J.">
        <title>Candidate ligand for the c-kit transmembrane kinase receptor: KL, a fibroblast derived growth factor stimulates mast cells and erythroid progenitors.</title>
        <authorList>
            <person name="Tan J.C."/>
            <person name="Buck J."/>
            <person name="Levi E."/>
            <person name="Besmer P."/>
        </authorList>
    </citation>
    <scope>FUNCTION</scope>
    <scope>SUBUNIT</scope>
</reference>
<reference key="9">
    <citation type="journal article" date="1991" name="EMBO J.">
        <title>Signal transduction by normal isoforms and W mutant variants of the Kit receptor tyrosine kinase.</title>
        <authorList>
            <person name="Reith A.D."/>
            <person name="Ellis C."/>
            <person name="Lyman S.D."/>
            <person name="Anderson D.M."/>
            <person name="Williams D.E."/>
            <person name="Bernstein A."/>
            <person name="Pawson T."/>
        </authorList>
    </citation>
    <scope>FUNCTION IN ACTIVATION OF PLCG1</scope>
    <scope>INTERACTION WITH PLCG1</scope>
    <scope>ALTERNATIVE SPLICING</scope>
    <scope>PHOSPHORYLATION</scope>
    <scope>GLYCOSYLATION</scope>
    <scope>CHARACTERIZATION OF VARIANTS W37 LYS-586 AND W41 MET-835</scope>
</reference>
<reference key="10">
    <citation type="journal article" date="1994" name="J. Biol. Chem.">
        <title>Tyrosine residue 719 of the c-kit receptor is essential for binding of the P85 subunit of phosphatidylinositol (PI) 3-kinase and for c-kit-associated PI 3-kinase activity in COS-1 cells.</title>
        <authorList>
            <person name="Serve H."/>
            <person name="Hsu Y.C."/>
            <person name="Besmer P."/>
        </authorList>
    </citation>
    <scope>INTERACTION WITH PIK3R1</scope>
    <scope>FUNCTION IN PHOSPHORYLATION OF PIK3R1</scope>
</reference>
<reference key="11">
    <citation type="journal article" date="1994" name="J. Biol. Chem.">
        <title>Mechanism of down-regulation of c-kit receptor. Roles of receptor tyrosine kinase, phosphatidylinositol 3'-kinase, and protein kinase C.</title>
        <authorList>
            <person name="Yee N.S."/>
            <person name="Hsiau C.W."/>
            <person name="Serve H."/>
            <person name="Vosseller K."/>
            <person name="Besmer P."/>
        </authorList>
    </citation>
    <scope>UBIQUITINATION</scope>
    <scope>SUBCELLULAR LOCATION</scope>
    <scope>CATALYTIC ACTIVITY</scope>
    <scope>PHOSPHORYLATION AT TYR-825</scope>
    <scope>INTERACTION WITH PIK3R1</scope>
    <scope>CHARACTERIZATION OF VARIANT W42 ASN-794</scope>
    <scope>MUTAGENESIS OF TYR-723</scope>
    <scope>TISSUE SPECIFICITY</scope>
</reference>
<reference key="12">
    <citation type="journal article" date="1998" name="J. Cell Biol.">
        <title>Involvement of phospholipase Cgamma1 in mouse egg activation induced by a truncated form of the C-kit tyrosine kinase present in spermatozoa.</title>
        <authorList>
            <person name="Sette C."/>
            <person name="Bevilacqua A."/>
            <person name="Geremia R."/>
            <person name="Rossi P."/>
        </authorList>
    </citation>
    <scope>ALTERNATIVE SPLICING</scope>
    <scope>FUNCTION IN ACTIVATION OF PLCG1</scope>
</reference>
<reference key="13">
    <citation type="journal article" date="1998" name="Mol. Cell. Biol.">
        <title>SHP-1 binds and negatively modulates the c-Kit receptor by interaction with tyrosine 569 in the c-Kit juxtamembrane domain.</title>
        <authorList>
            <person name="Kozlowski M."/>
            <person name="Larose L."/>
            <person name="Lee F."/>
            <person name="Le D.M."/>
            <person name="Rottapel R."/>
            <person name="Siminovitch K.A."/>
        </authorList>
    </citation>
    <scope>INTERACTION WITH PTPN6/SHP-1 AND PTPN11/SHP-2</scope>
    <scope>FUNCTION IN PHOSPHORYLATION OF PTPN6/SHP-1</scope>
    <scope>MUTAGENESIS OF TYR-571 AND TYR-573</scope>
</reference>
<reference key="14">
    <citation type="journal article" date="2003" name="Andrologia">
        <title>Molecular mechanisms utilized by alternative c-kit gene products in the control of spermatogonial proliferation and sperm-mediated egg activation.</title>
        <authorList>
            <person name="Rossi P."/>
            <person name="Dolci S."/>
            <person name="Sette C."/>
            <person name="Geremia R."/>
        </authorList>
    </citation>
    <scope>REVIEW ON ROLE IN SPERMATOGENESIS AND FERTILITY</scope>
</reference>
<reference key="15">
    <citation type="journal article" date="2007" name="Blood">
        <title>The tyrosine kinase FES is an essential effector of KITD816V proliferation signal.</title>
        <authorList>
            <person name="Voisset E."/>
            <person name="Lopez S."/>
            <person name="Dubreuil P."/>
            <person name="De Sepulveda P."/>
        </authorList>
    </citation>
    <scope>INTERACTION WITH FES/FPS</scope>
</reference>
<reference key="16">
    <citation type="journal article" date="2007" name="J. Immunol.">
        <title>Quantitative time-resolved phosphoproteomic analysis of mast cell signaling.</title>
        <authorList>
            <person name="Cao L."/>
            <person name="Yu K."/>
            <person name="Banh C."/>
            <person name="Nguyen V."/>
            <person name="Ritz A."/>
            <person name="Raphael B.J."/>
            <person name="Kawakami Y."/>
            <person name="Kawakami T."/>
            <person name="Salomon A.R."/>
        </authorList>
    </citation>
    <scope>PHOSPHORYLATION [LARGE SCALE ANALYSIS] AT TYR-571; TYR-573; TYR-706 AND TYR-938</scope>
    <scope>IDENTIFICATION BY MASS SPECTROMETRY [LARGE SCALE ANALYSIS]</scope>
    <source>
        <tissue>Mast cell</tissue>
    </source>
</reference>
<reference key="17">
    <citation type="journal article" date="2008" name="J. Biol. Chem.">
        <title>Protein-tyrosine phosphatase alpha regulates stem cell factor-dependent c-Kit activation and migration of mast cells.</title>
        <authorList>
            <person name="Samayawardhena L.A."/>
            <person name="Pallen C.J."/>
        </authorList>
    </citation>
    <scope>FUNCTION IN MAST CELL MIGRATION</scope>
    <scope>IN SIGNALING VIA FYN</scope>
</reference>
<reference key="18">
    <citation type="journal article" date="2008" name="Stem Cells Dev.">
        <title>Murine hematopoietic stem cells and multipotent progenitors express truncated intracellular form of c-kit receptor.</title>
        <authorList>
            <person name="Zayas J."/>
            <person name="Spassov D.S."/>
            <person name="Nachtman R.G."/>
            <person name="Jurecic R."/>
        </authorList>
    </citation>
    <scope>ALTERNATIVE SPLICING</scope>
    <scope>TISSUE SPECIFICITY</scope>
</reference>
<reference key="19">
    <citation type="journal article" date="2010" name="Am. J. Pathol.">
        <title>Nf1-/- Schwann cell-conditioned medium modulates mast cell degranulation by c-Kit-mediated hyperactivation of phosphatidylinositol 3-kinase.</title>
        <authorList>
            <person name="Chen S."/>
            <person name="Burgin S."/>
            <person name="McDaniel A."/>
            <person name="Li X."/>
            <person name="Yuan J."/>
            <person name="Chen M."/>
            <person name="Khalaf W."/>
            <person name="Clapp D.W."/>
            <person name="Yang F.C."/>
        </authorList>
    </citation>
    <scope>FUNCTION IN MAST CELL DEGRANULATION</scope>
</reference>
<reference key="20">
    <citation type="journal article" date="2010" name="Blood">
        <title>The receptor tyrosine kinase c-Kit controls IL-33 receptor signaling in mast cells.</title>
        <authorList>
            <person name="Drube S."/>
            <person name="Heink S."/>
            <person name="Walter S."/>
            <person name="Loehn T."/>
            <person name="Grusser M."/>
            <person name="Gerbaulet A."/>
            <person name="Berod L."/>
            <person name="Schons J."/>
            <person name="Dudeck A."/>
            <person name="Freitag J."/>
            <person name="Grotha S."/>
            <person name="Reich D."/>
            <person name="Rudeschko O."/>
            <person name="Norgauer J."/>
            <person name="Hartmann K."/>
            <person name="Roers A."/>
            <person name="Kamradt T."/>
        </authorList>
    </citation>
    <scope>INTERACTION WITH IL1RL1 AND IL1RAP</scope>
    <scope>SUBUNIT</scope>
</reference>
<reference key="21">
    <citation type="journal article" date="2010" name="Cell">
        <title>A tissue-specific atlas of mouse protein phosphorylation and expression.</title>
        <authorList>
            <person name="Huttlin E.L."/>
            <person name="Jedrychowski M.P."/>
            <person name="Elias J.E."/>
            <person name="Goswami T."/>
            <person name="Rad R."/>
            <person name="Beausoleil S.A."/>
            <person name="Villen J."/>
            <person name="Haas W."/>
            <person name="Sowa M.E."/>
            <person name="Gygi S.P."/>
        </authorList>
    </citation>
    <scope>PHOSPHORYLATION [LARGE SCALE ANALYSIS] AT SER-720</scope>
    <scope>IDENTIFICATION BY MASS SPECTROMETRY [LARGE SCALE ANALYSIS]</scope>
    <source>
        <tissue>Brain</tissue>
        <tissue>Lung</tissue>
        <tissue>Spleen</tissue>
        <tissue>Testis</tissue>
    </source>
</reference>
<reference key="22">
    <citation type="unpublished observations" date="2010-04">
        <authorList>
            <person name="Jawad-Alam J."/>
        </authorList>
    </citation>
    <scope>VARIANT GLU-207</scope>
</reference>
<reference key="23">
    <citation type="journal article" date="2007" name="EMBO J.">
        <title>Structural basis for stem cell factor-KIT signaling and activation of class III receptor tyrosine kinases.</title>
        <authorList>
            <person name="Liu H."/>
            <person name="Chen X."/>
            <person name="Focia P.J."/>
            <person name="He X."/>
        </authorList>
    </citation>
    <scope>X-RAY CRYSTALLOGRAPHY (2.5 ANGSTROMS) OF 25-314 IN COMPLEX WITH KITLG/SCF</scope>
    <scope>DISULFIDE BONDS</scope>
    <scope>GLYCOSYLATION AT ASN-296 AND ASN-303</scope>
</reference>
<reference key="24">
    <citation type="journal article" date="1990" name="Science">
        <title>The dominant W42 spotting phenotype results from a missense mutation in the c-kit receptor kinase.</title>
        <authorList>
            <person name="Tan J.C."/>
            <person name="Nocka K."/>
            <person name="Ray P."/>
            <person name="Traktman P."/>
            <person name="Besmer P."/>
        </authorList>
    </citation>
    <scope>VARIANT W42 ASN-794</scope>
    <scope>INVOLVEMENT IN WHITE-SPOTTING PHENOTYPE</scope>
</reference>
<reference key="25">
    <citation type="journal article" date="1990" name="EMBO J.">
        <title>Molecular bases of dominant negative and loss of function mutations at the murine c-kit/white spotting locus: W37, Wv, W41 and W.</title>
        <authorList>
            <person name="Nocka K."/>
            <person name="Tan J.C."/>
            <person name="Chiu E."/>
            <person name="Chu T.Y."/>
            <person name="Ray P."/>
            <person name="Traktman P."/>
            <person name="Besmer P."/>
        </authorList>
    </citation>
    <scope>VARIANT W37 LYS-586</scope>
    <scope>VARIANT WV MET-664</scope>
    <scope>VARIANT W41 MET-835</scope>
    <scope>INVOLVEMENT IN WHITE-SPOTTING PHENOTYPE</scope>
</reference>
<feature type="signal peptide" evidence="3">
    <location>
        <begin position="1"/>
        <end position="24"/>
    </location>
</feature>
<feature type="chain" id="PRO_0000016755" description="Mast/stem cell growth factor receptor Kit">
    <location>
        <begin position="25"/>
        <end position="979"/>
    </location>
</feature>
<feature type="topological domain" description="Extracellular" evidence="3">
    <location>
        <begin position="25"/>
        <end position="527"/>
    </location>
</feature>
<feature type="transmembrane region" description="Helical" evidence="3">
    <location>
        <begin position="528"/>
        <end position="548"/>
    </location>
</feature>
<feature type="topological domain" description="Cytoplasmic" evidence="3">
    <location>
        <begin position="549"/>
        <end position="979"/>
    </location>
</feature>
<feature type="domain" description="Ig-like C2-type 1">
    <location>
        <begin position="31"/>
        <end position="117"/>
    </location>
</feature>
<feature type="domain" description="Ig-like C2-type 2">
    <location>
        <begin position="126"/>
        <end position="210"/>
    </location>
</feature>
<feature type="domain" description="Ig-like C2-type 3">
    <location>
        <begin position="217"/>
        <end position="315"/>
    </location>
</feature>
<feature type="domain" description="Ig-like C2-type 4">
    <location>
        <begin position="324"/>
        <end position="417"/>
    </location>
</feature>
<feature type="domain" description="Ig-like C2-type 5">
    <location>
        <begin position="420"/>
        <end position="514"/>
    </location>
</feature>
<feature type="domain" description="Protein kinase" evidence="5">
    <location>
        <begin position="592"/>
        <end position="939"/>
    </location>
</feature>
<feature type="region of interest" description="Important for interaction with phosphotyrosine-binding proteins" evidence="1">
    <location>
        <begin position="571"/>
        <end position="573"/>
    </location>
</feature>
<feature type="active site" description="Proton acceptor" evidence="5 6">
    <location>
        <position position="794"/>
    </location>
</feature>
<feature type="binding site" evidence="1">
    <location>
        <position position="571"/>
    </location>
    <ligand>
        <name>Mg(2+)</name>
        <dbReference type="ChEBI" id="CHEBI:18420"/>
    </ligand>
</feature>
<feature type="binding site" evidence="5">
    <location>
        <begin position="599"/>
        <end position="606"/>
    </location>
    <ligand>
        <name>ATP</name>
        <dbReference type="ChEBI" id="CHEBI:30616"/>
    </ligand>
</feature>
<feature type="binding site" evidence="5">
    <location>
        <position position="626"/>
    </location>
    <ligand>
        <name>ATP</name>
        <dbReference type="ChEBI" id="CHEBI:30616"/>
    </ligand>
</feature>
<feature type="binding site" evidence="5">
    <location>
        <begin position="674"/>
        <end position="680"/>
    </location>
    <ligand>
        <name>ATP</name>
        <dbReference type="ChEBI" id="CHEBI:30616"/>
    </ligand>
</feature>
<feature type="binding site" evidence="5">
    <location>
        <position position="798"/>
    </location>
    <ligand>
        <name>ATP</name>
        <dbReference type="ChEBI" id="CHEBI:30616"/>
    </ligand>
</feature>
<feature type="binding site" evidence="1">
    <location>
        <position position="799"/>
    </location>
    <ligand>
        <name>Mg(2+)</name>
        <dbReference type="ChEBI" id="CHEBI:18420"/>
    </ligand>
</feature>
<feature type="binding site" evidence="1">
    <location>
        <position position="812"/>
    </location>
    <ligand>
        <name>Mg(2+)</name>
        <dbReference type="ChEBI" id="CHEBI:18420"/>
    </ligand>
</feature>
<feature type="site" description="Important for interaction with phosphotyrosine-binding proteins" evidence="1">
    <location>
        <position position="938"/>
    </location>
</feature>
<feature type="modified residue" description="Phosphotyrosine; by autocatalysis" evidence="2">
    <location>
        <position position="550"/>
    </location>
</feature>
<feature type="modified residue" description="Phosphotyrosine; by autocatalysis" evidence="2">
    <location>
        <position position="556"/>
    </location>
</feature>
<feature type="modified residue" description="Phosphotyrosine" evidence="30">
    <location>
        <position position="571"/>
    </location>
</feature>
<feature type="modified residue" description="Phosphotyrosine" evidence="30">
    <location>
        <position position="573"/>
    </location>
</feature>
<feature type="modified residue" description="Phosphotyrosine" evidence="30">
    <location>
        <position position="706"/>
    </location>
</feature>
<feature type="modified residue" description="Phosphoserine" evidence="31">
    <location>
        <position position="720"/>
    </location>
</feature>
<feature type="modified residue" description="Phosphotyrosine; by autocatalysis" evidence="2">
    <location>
        <position position="723"/>
    </location>
</feature>
<feature type="modified residue" description="Phosphotyrosine; by autocatalysis" evidence="2">
    <location>
        <position position="732"/>
    </location>
</feature>
<feature type="modified residue" description="Phosphoserine; by PKC/PRKCA" evidence="2">
    <location>
        <position position="743"/>
    </location>
</feature>
<feature type="modified residue" description="Phosphoserine; by PKC/PRKCA" evidence="2">
    <location>
        <position position="748"/>
    </location>
</feature>
<feature type="modified residue" description="Phosphoserine" evidence="2">
    <location>
        <position position="823"/>
    </location>
</feature>
<feature type="modified residue" description="Phosphotyrosine; by autocatalysis" evidence="21">
    <location>
        <position position="825"/>
    </location>
</feature>
<feature type="modified residue" description="Phosphoserine" evidence="2">
    <location>
        <position position="893"/>
    </location>
</feature>
<feature type="modified residue" description="Phosphotyrosine; by autocatalysis" evidence="2">
    <location>
        <position position="902"/>
    </location>
</feature>
<feature type="modified residue" description="Phosphotyrosine" evidence="30">
    <location>
        <position position="938"/>
    </location>
</feature>
<feature type="modified residue" description="Phosphoserine" evidence="2">
    <location>
        <position position="962"/>
    </location>
</feature>
<feature type="glycosylation site" description="N-linked (GlcNAc...) asparagine" evidence="3">
    <location>
        <position position="146"/>
    </location>
</feature>
<feature type="glycosylation site" description="N-linked (GlcNAc...) asparagine" evidence="13">
    <location>
        <position position="296"/>
    </location>
</feature>
<feature type="glycosylation site" description="N-linked (GlcNAc...) asparagine" evidence="13">
    <location>
        <position position="303"/>
    </location>
</feature>
<feature type="glycosylation site" description="N-linked (GlcNAc...) asparagine" evidence="3">
    <location>
        <position position="323"/>
    </location>
</feature>
<feature type="glycosylation site" description="N-linked (GlcNAc...) asparagine" evidence="3">
    <location>
        <position position="355"/>
    </location>
</feature>
<feature type="glycosylation site" description="N-linked (GlcNAc...) asparagine" evidence="3">
    <location>
        <position position="370"/>
    </location>
</feature>
<feature type="glycosylation site" description="N-linked (GlcNAc...) asparagine" evidence="3">
    <location>
        <position position="466"/>
    </location>
</feature>
<feature type="glycosylation site" description="N-linked (GlcNAc...) asparagine" evidence="3">
    <location>
        <position position="489"/>
    </location>
</feature>
<feature type="disulfide bond" evidence="4 13">
    <location>
        <begin position="58"/>
        <end position="98"/>
    </location>
</feature>
<feature type="disulfide bond" evidence="4 13">
    <location>
        <begin position="137"/>
        <end position="187"/>
    </location>
</feature>
<feature type="disulfide bond" evidence="4 13">
    <location>
        <begin position="152"/>
        <end position="184"/>
    </location>
</feature>
<feature type="disulfide bond" evidence="4 13">
    <location>
        <begin position="234"/>
        <end position="293"/>
    </location>
</feature>
<feature type="disulfide bond" evidence="4">
    <location>
        <begin position="431"/>
        <end position="494"/>
    </location>
</feature>
<feature type="splice variant" id="VSP_041868" description="In isoform 3." evidence="25">
    <original>MRGARGAWDLLC</original>
    <variation>MAVAVFPFLPQQ</variation>
    <location>
        <begin position="1"/>
        <end position="12"/>
    </location>
</feature>
<feature type="splice variant" id="VSP_041869" description="In isoform 3." evidence="25">
    <location>
        <begin position="13"/>
        <end position="789"/>
    </location>
</feature>
<feature type="splice variant" id="VSP_041870" description="In isoform 2." evidence="26 27 28">
    <location>
        <begin position="512"/>
        <end position="515"/>
    </location>
</feature>
<feature type="sequence variant" description="Loss-of-function mutation abolishing ligand binding." evidence="19 24">
    <original>A</original>
    <variation>E</variation>
    <location>
        <position position="207"/>
    </location>
</feature>
<feature type="sequence variant" description="In W37; impaired protein stability and loss of kinase activity." evidence="10 12">
    <original>E</original>
    <variation>K</variation>
    <location>
        <position position="586"/>
    </location>
</feature>
<feature type="sequence variant" description="In Wv." evidence="10">
    <original>T</original>
    <variation>M</variation>
    <location>
        <position position="664"/>
    </location>
</feature>
<feature type="sequence variant" description="In W42; loss of kinase activity and impaired internalization after exposure to KITLG/SCF." evidence="9 21">
    <original>D</original>
    <variation>N</variation>
    <location>
        <position position="794"/>
    </location>
</feature>
<feature type="sequence variant" description="In W41; decreased kinase activity." evidence="10 12">
    <original>V</original>
    <variation>M</variation>
    <location>
        <position position="835"/>
    </location>
</feature>
<feature type="mutagenesis site" description="Abolishes interaction with PTPN11/SHP-2." evidence="22">
    <original>Y</original>
    <variation>F</variation>
    <location>
        <position position="571"/>
    </location>
</feature>
<feature type="mutagenesis site" description="Abolishes interaction with PTPN6/SHP-1." evidence="22">
    <original>Y</original>
    <variation>F</variation>
    <location>
        <position position="573"/>
    </location>
</feature>
<feature type="mutagenesis site" description="Abolishes interaction with PTPN6/SHP-1." evidence="22">
    <location>
        <position position="573"/>
    </location>
</feature>
<feature type="mutagenesis site" description="Abolishes interaction with PIK3R1." evidence="21">
    <original>Y</original>
    <variation>F</variation>
    <location>
        <position position="723"/>
    </location>
</feature>
<feature type="mutagenesis site" description="Mice display white fur, hearing loss, anemia and mast cell deficiency, plus sterility in both males and females." evidence="8">
    <original>F</original>
    <variation>S</variation>
    <location>
        <position position="860"/>
    </location>
</feature>
<feature type="sequence conflict" description="In Ref. 6; AAH52457." evidence="29" ref="6">
    <original>L</original>
    <variation>F</variation>
    <location>
        <position position="551"/>
    </location>
</feature>
<feature type="sequence conflict" description="In Ref. 1; CAA68772 and 2; CAA46799." evidence="29" ref="1 2">
    <original>G</original>
    <variation>A</variation>
    <location>
        <position position="781"/>
    </location>
</feature>
<feature type="sequence conflict" description="In Ref. 4; AAS45607." evidence="29" ref="4">
    <original>F</original>
    <variation>S</variation>
    <location>
        <position position="860"/>
    </location>
</feature>
<feature type="strand" evidence="32">
    <location>
        <begin position="38"/>
        <end position="41"/>
    </location>
</feature>
<feature type="strand" evidence="32">
    <location>
        <begin position="43"/>
        <end position="49"/>
    </location>
</feature>
<feature type="strand" evidence="32">
    <location>
        <begin position="54"/>
        <end position="59"/>
    </location>
</feature>
<feature type="strand" evidence="32">
    <location>
        <begin position="63"/>
        <end position="69"/>
    </location>
</feature>
<feature type="strand" evidence="32">
    <location>
        <begin position="71"/>
        <end position="73"/>
    </location>
</feature>
<feature type="strand" evidence="32">
    <location>
        <begin position="75"/>
        <end position="78"/>
    </location>
</feature>
<feature type="strand" evidence="32">
    <location>
        <begin position="80"/>
        <end position="85"/>
    </location>
</feature>
<feature type="helix" evidence="32">
    <location>
        <begin position="90"/>
        <end position="92"/>
    </location>
</feature>
<feature type="strand" evidence="32">
    <location>
        <begin position="94"/>
        <end position="103"/>
    </location>
</feature>
<feature type="strand" evidence="32">
    <location>
        <begin position="105"/>
        <end position="113"/>
    </location>
</feature>
<feature type="strand" evidence="32">
    <location>
        <begin position="125"/>
        <end position="128"/>
    </location>
</feature>
<feature type="strand" evidence="32">
    <location>
        <begin position="133"/>
        <end position="135"/>
    </location>
</feature>
<feature type="strand" evidence="32">
    <location>
        <begin position="145"/>
        <end position="151"/>
    </location>
</feature>
<feature type="strand" evidence="32">
    <location>
        <begin position="162"/>
        <end position="166"/>
    </location>
</feature>
<feature type="turn" evidence="32">
    <location>
        <begin position="167"/>
        <end position="169"/>
    </location>
</feature>
<feature type="strand" evidence="32">
    <location>
        <begin position="170"/>
        <end position="175"/>
    </location>
</feature>
<feature type="helix" evidence="32">
    <location>
        <begin position="178"/>
        <end position="180"/>
    </location>
</feature>
<feature type="strand" evidence="32">
    <location>
        <begin position="184"/>
        <end position="191"/>
    </location>
</feature>
<feature type="strand" evidence="32">
    <location>
        <begin position="194"/>
        <end position="197"/>
    </location>
</feature>
<feature type="strand" evidence="32">
    <location>
        <begin position="201"/>
        <end position="206"/>
    </location>
</feature>
<feature type="strand" evidence="32">
    <location>
        <begin position="214"/>
        <end position="216"/>
    </location>
</feature>
<feature type="strand" evidence="32">
    <location>
        <begin position="230"/>
        <end position="240"/>
    </location>
</feature>
<feature type="strand" evidence="32">
    <location>
        <begin position="244"/>
        <end position="256"/>
    </location>
</feature>
<feature type="strand" evidence="32">
    <location>
        <begin position="264"/>
        <end position="268"/>
    </location>
</feature>
<feature type="strand" evidence="32">
    <location>
        <begin position="271"/>
        <end position="282"/>
    </location>
</feature>
<feature type="strand" evidence="32">
    <location>
        <begin position="285"/>
        <end position="287"/>
    </location>
</feature>
<feature type="strand" evidence="32">
    <location>
        <begin position="289"/>
        <end position="296"/>
    </location>
</feature>
<feature type="strand" evidence="32">
    <location>
        <begin position="301"/>
        <end position="308"/>
    </location>
</feature>
<evidence type="ECO:0000250" key="1"/>
<evidence type="ECO:0000250" key="2">
    <source>
        <dbReference type="UniProtKB" id="P10721"/>
    </source>
</evidence>
<evidence type="ECO:0000255" key="3"/>
<evidence type="ECO:0000255" key="4">
    <source>
        <dbReference type="PROSITE-ProRule" id="PRU00114"/>
    </source>
</evidence>
<evidence type="ECO:0000255" key="5">
    <source>
        <dbReference type="PROSITE-ProRule" id="PRU00159"/>
    </source>
</evidence>
<evidence type="ECO:0000255" key="6">
    <source>
        <dbReference type="PROSITE-ProRule" id="PRU10028"/>
    </source>
</evidence>
<evidence type="ECO:0000269" key="7">
    <source>
    </source>
</evidence>
<evidence type="ECO:0000269" key="8">
    <source>
    </source>
</evidence>
<evidence type="ECO:0000269" key="9">
    <source>
    </source>
</evidence>
<evidence type="ECO:0000269" key="10">
    <source>
    </source>
</evidence>
<evidence type="ECO:0000269" key="11">
    <source>
    </source>
</evidence>
<evidence type="ECO:0000269" key="12">
    <source>
    </source>
</evidence>
<evidence type="ECO:0000269" key="13">
    <source>
    </source>
</evidence>
<evidence type="ECO:0000269" key="14">
    <source>
    </source>
</evidence>
<evidence type="ECO:0000269" key="15">
    <source>
    </source>
</evidence>
<evidence type="ECO:0000269" key="16">
    <source>
    </source>
</evidence>
<evidence type="ECO:0000269" key="17">
    <source>
    </source>
</evidence>
<evidence type="ECO:0000269" key="18">
    <source>
    </source>
</evidence>
<evidence type="ECO:0000269" key="19">
    <source>
    </source>
</evidence>
<evidence type="ECO:0000269" key="20">
    <source>
    </source>
</evidence>
<evidence type="ECO:0000269" key="21">
    <source>
    </source>
</evidence>
<evidence type="ECO:0000269" key="22">
    <source>
    </source>
</evidence>
<evidence type="ECO:0000269" key="23">
    <source>
    </source>
</evidence>
<evidence type="ECO:0000269" key="24">
    <source ref="22"/>
</evidence>
<evidence type="ECO:0000303" key="25">
    <source>
    </source>
</evidence>
<evidence type="ECO:0000303" key="26">
    <source>
    </source>
</evidence>
<evidence type="ECO:0000303" key="27">
    <source>
    </source>
</evidence>
<evidence type="ECO:0000303" key="28">
    <source>
    </source>
</evidence>
<evidence type="ECO:0000305" key="29"/>
<evidence type="ECO:0007744" key="30">
    <source>
    </source>
</evidence>
<evidence type="ECO:0007744" key="31">
    <source>
    </source>
</evidence>
<evidence type="ECO:0007829" key="32">
    <source>
        <dbReference type="PDB" id="2O26"/>
    </source>
</evidence>
<sequence>MRGARGAWDLLCVLLVLLRGQTATSQPSASPGEPSPPSIHPAQSELIVEAGDTLSLTCIDPDFVRWTFKTYFNEMVENKKNEWIQEKAEATRTGTYTCSNSNGLTSSIYVFVRDPAKLFLVGLPLFGKEDSDALVRCPLTDPQVSNYSLIECDGKSLPTDLTFVPNPKAGITIKNVKRAYHRLCVRCAAQRDGTWLHSDKFTLKVRAAIKAIPVVSVPETSHLLKKGDTFTVVCTIKDVSTSVNSMWLKMNPQPQHIAQVKHNSWHRGDFNYERQETLTISSARVDDSGVFMCYANNTFGSANVTTTLKVVEKGFINISPVKNTTVFVTDGENVDLVVEYEAYPKPEHQQWIYMNRTSANKGKDYVKSDNKSNIRYVNQLRLTRLKGTEGGTYTFLVSNSDASASVTFNVYVNTKPEILTYDRLINGMLQCVAEGFPEPTIDWYFCTGAEQRCTTPVSPVDVQVQNVSVSPFGKLVVQSSIDSSVFRHNGTVECKASNDVGKSSAFFNFAFKGNNKEQIQAHTLFTPLLIGFVVAAGAMGIIVMVLTYKYLQKPMYEVQWKVVEEINGNNYVYIDPTQLPYDHKWEFPRNRLSFGKTLGAGAFGKVVEATAYGLIKSDAAMTVAVKMLKPSAHLTEREALMSELKVLSYLGNHMNIVNLLGACTVGGPTLVITEYCCYGDLLNFLRRKRDSFIFSKQEEQAEAALYKNLLHSTEPSCDSSNEYMDMKPGVSYVVPTKTDKRRSARIDSYIERDVTPAIMEDDELALDLDDLLSFSYQVAKGMAFLASKNCIHRDLAARNILLTHGRITKICDFGLARDIRNDSNYVVKGNARLPVKWMAPESIFSCVYTFESDVWSYGIFLWELFSLGSSPYPGMPVDSKFYKMIKEGFRMVSPEHAPAEMYDVMKTCWDADPLKRPTFKQVVQLIEKQISDSTKHIYSNLANCNPNPENPVVVDHSVRVNSVGSSASSTQPLLVHEDA</sequence>
<keyword id="KW-0002">3D-structure</keyword>
<keyword id="KW-0025">Alternative splicing</keyword>
<keyword id="KW-0067">ATP-binding</keyword>
<keyword id="KW-1003">Cell membrane</keyword>
<keyword id="KW-0963">Cytoplasm</keyword>
<keyword id="KW-0225">Disease variant</keyword>
<keyword id="KW-1015">Disulfide bond</keyword>
<keyword id="KW-0325">Glycoprotein</keyword>
<keyword id="KW-0393">Immunoglobulin domain</keyword>
<keyword id="KW-0418">Kinase</keyword>
<keyword id="KW-0460">Magnesium</keyword>
<keyword id="KW-0472">Membrane</keyword>
<keyword id="KW-0479">Metal-binding</keyword>
<keyword id="KW-0547">Nucleotide-binding</keyword>
<keyword id="KW-0597">Phosphoprotein</keyword>
<keyword id="KW-0656">Proto-oncogene</keyword>
<keyword id="KW-0675">Receptor</keyword>
<keyword id="KW-1185">Reference proteome</keyword>
<keyword id="KW-0677">Repeat</keyword>
<keyword id="KW-0732">Signal</keyword>
<keyword id="KW-0808">Transferase</keyword>
<keyword id="KW-0812">Transmembrane</keyword>
<keyword id="KW-1133">Transmembrane helix</keyword>
<keyword id="KW-0829">Tyrosine-protein kinase</keyword>
<keyword id="KW-0832">Ubl conjugation</keyword>
<comment type="function">
    <text evidence="11 12 16 18 20 22 23">Tyrosine-protein kinase that acts as a cell-surface receptor for the cytokine KITLG/SCF and plays an essential role in the regulation of cell survival and proliferation, hematopoiesis, stem cell maintenance, gametogenesis, mast cell development, migration and function, and in melanogenesis. In response to KITLG/SCF binding, KIT can activate several signaling pathways. Phosphorylates PIK3R1, PLCG1, SH2B2/APS and CBL. Activates the AKT1 signaling pathway by phosphorylation of PIK3R1, the regulatory subunit of phosphatidylinositol 3-kinase. Activated KIT also transmits signals via GRB2 and activation of RAS, RAF1 and the MAP kinases MAPK1/ERK2 and/or MAPK3/ERK1. Promotes activation of STAT family members STAT1, STAT3, STAT5A and STAT5B. Activation of PLCG1 leads to the production of the cellular signaling molecules diacylglycerol and inositol 1,4,5-trisphosphate. KIT signaling is modulated by protein phosphatases, and by rapid internalization and degradation of the receptor. Activated KIT promotes phosphorylation of the protein phosphatases PTPN6/SHP-1 and PTPRU, and of the transcription factors STAT1, STAT3, STAT5A and STAT5B. Promotes phosphorylation of PIK3R1, CBL, CRK (isoform Crk-II), LYN, MAPK1/ERK2 and/or MAPK3/ERK1, PLCG1, SRC and SHC1.</text>
</comment>
<comment type="catalytic activity">
    <reaction evidence="6 21">
        <text>L-tyrosyl-[protein] + ATP = O-phospho-L-tyrosyl-[protein] + ADP + H(+)</text>
        <dbReference type="Rhea" id="RHEA:10596"/>
        <dbReference type="Rhea" id="RHEA-COMP:10136"/>
        <dbReference type="Rhea" id="RHEA-COMP:20101"/>
        <dbReference type="ChEBI" id="CHEBI:15378"/>
        <dbReference type="ChEBI" id="CHEBI:30616"/>
        <dbReference type="ChEBI" id="CHEBI:46858"/>
        <dbReference type="ChEBI" id="CHEBI:61978"/>
        <dbReference type="ChEBI" id="CHEBI:456216"/>
        <dbReference type="EC" id="2.7.10.1"/>
    </reaction>
</comment>
<comment type="activity regulation">
    <text>Present in an inactive conformation in the absence of bound ligand. KITLG/SCF binding leads to dimerization and activation by autophosphorylation.</text>
</comment>
<comment type="subunit">
    <text evidence="2 11 12 13 14 17 20 21 22">Monomer in the absence of bound KITLG/SCF. Homodimer in the presence of bound KITLG/SCF, forming a heterotetramer with two KITLG/SCF molecules. Interacts (via phosphorylated tyrosine residues) with the adapter proteins GRB2 and GRB7 (via SH2 domain), and SH2B2/APS. Interacts (via C-terminus) with MPDZ (via the tenth PDZ domain). Interacts (via phosphorylated tyrosine residues) with the protein phosphatases PTPN6/SHP-1 (via SH2 domain), PTPN11/SHP-2 (via SH2 domain) and PTPRU. Interacts with DOK1 and TEC (By similarity). Interacts with the protein kinase FES/FPS. Interacts with PLCG1. Interacts (via phosphorylated tyrosine residues) with PIK3R1 and PIK3 catalytic subunit. Interacts (KITLG/SCF-bound) with IL1RL1. Interacts with IL1RAP (independent of stimulation with KITLG/SCF). A mast cell-specific KITLG/SCF-induced interleukin-33 signaling complex contains IL1RL1, IL1RAP, KIT and MYD88.</text>
</comment>
<comment type="interaction">
    <interactant intactId="EBI-8559255">
        <id>P05532</id>
    </interactant>
    <interactant intactId="EBI-1810026">
        <id>P26955</id>
        <label>Csf2rb</label>
    </interactant>
    <organismsDiffer>false</organismsDiffer>
    <experiments>4</experiments>
</comment>
<comment type="subcellular location">
    <molecule>Isoform 1</molecule>
    <subcellularLocation>
        <location>Cell membrane</location>
        <topology>Single-pass type I membrane protein</topology>
    </subcellularLocation>
</comment>
<comment type="subcellular location">
    <molecule>Isoform 2</molecule>
    <subcellularLocation>
        <location>Cell membrane</location>
        <topology>Single-pass type I membrane protein</topology>
    </subcellularLocation>
</comment>
<comment type="subcellular location">
    <molecule>Isoform 3</molecule>
    <subcellularLocation>
        <location>Cytoplasm</location>
    </subcellularLocation>
    <text evidence="1">Detected in the cytoplasm of spermatozoa, especially in the equatorial and subacrosomal region of the sperm head.</text>
</comment>
<comment type="alternative products">
    <event type="alternative splicing"/>
    <isoform>
        <id>P05532-1</id>
        <name>1</name>
        <name>GNNK(+)</name>
        <name>KitA(+)</name>
        <sequence type="displayed"/>
    </isoform>
    <isoform>
        <id>P05532-2</id>
        <name>2</name>
        <name>GNNK(-)</name>
        <name>Kit(+)</name>
        <sequence type="described" ref="VSP_041870"/>
    </isoform>
    <isoform>
        <id>P05532-3</id>
        <name>3</name>
        <name>Tr-kit</name>
        <name>Truncated</name>
        <sequence type="described" ref="VSP_041868 VSP_041869"/>
    </isoform>
</comment>
<comment type="tissue specificity">
    <text evidence="7 15 21">Isoform 1 and isoform 2 are detected in bone marrow cells, spermatogonia and spermatocytes, but not in round spermatids, elongating spermatids and spermatozoa. Isoform 3 is detected in round spermatids, elongating spermatids and spermatozoa, but not in spermatogonia and spermatocytes (at protein level). Isoform 1 is widely expressed and detected in fetal liver and bone marrow. Isoform 3 is detected in bone marrow cells enriched in hematopoietic stem cells.</text>
</comment>
<comment type="PTM">
    <text evidence="1">Ubiquitinated by SOCS6. KIT is rapidly ubiquitinated after autophosphorylation induced by KITLG/SCF binding, leading to internalization and degradation (By similarity).</text>
</comment>
<comment type="PTM">
    <text evidence="12 21">Autophosphorylated on tyrosine residues. KITLG/SCF binding promotes autophosphorylation of isoform 1 and isoform 2. Isoform 1 shows low levels of tyrosine phosphorylation in the absence of added KITLG/SCF, while isoform 2 requires stimulation by KITLG/SCF for phosphorylation (in vitro). Phosphorylation of Tyr-573 is required for interaction with PTPN6/SHP-1. Phosphorylation of Tyr-571 is required for interaction with PTPN11/SHP-2. Phosphorylated tyrosine residues are important for interaction with specific binding partners.</text>
</comment>
<comment type="disease">
    <text evidence="9 10">Defects in Kit are the cause of the white-spotting phenotype (W). White-spotting variants induces severe effects on pigmentation, gametogenesis and hematopoiesis. Mice homozygous for W42 die perinatally of macrocytic anemia.</text>
</comment>
<comment type="miscellaneous">
    <text>Numerous proteins are phosphorylated in response to KIT signaling, but it is not evident to determine which are directly phosphorylated by KIT under in vivo conditions.</text>
</comment>
<comment type="similarity">
    <text evidence="5">Belongs to the protein kinase superfamily. Tyr protein kinase family. CSF-1/PDGF receptor subfamily.</text>
</comment>
<gene>
    <name type="primary">Kit</name>
    <name type="synonym">Sl</name>
</gene>
<proteinExistence type="evidence at protein level"/>
<organism>
    <name type="scientific">Mus musculus</name>
    <name type="common">Mouse</name>
    <dbReference type="NCBI Taxonomy" id="10090"/>
    <lineage>
        <taxon>Eukaryota</taxon>
        <taxon>Metazoa</taxon>
        <taxon>Chordata</taxon>
        <taxon>Craniata</taxon>
        <taxon>Vertebrata</taxon>
        <taxon>Euteleostomi</taxon>
        <taxon>Mammalia</taxon>
        <taxon>Eutheria</taxon>
        <taxon>Euarchontoglires</taxon>
        <taxon>Glires</taxon>
        <taxon>Rodentia</taxon>
        <taxon>Myomorpha</taxon>
        <taxon>Muroidea</taxon>
        <taxon>Muridae</taxon>
        <taxon>Murinae</taxon>
        <taxon>Mus</taxon>
        <taxon>Mus</taxon>
    </lineage>
</organism>
<protein>
    <recommendedName>
        <fullName>Mast/stem cell growth factor receptor Kit</fullName>
        <shortName>SCFR</shortName>
        <ecNumber>2.7.10.1</ecNumber>
    </recommendedName>
    <alternativeName>
        <fullName>Proto-oncogene c-Kit</fullName>
    </alternativeName>
    <alternativeName>
        <fullName>Tyrosine-protein kinase Kit</fullName>
    </alternativeName>
    <cdAntigenName>CD117</cdAntigenName>
</protein>